<reference evidence="2 3" key="1">
    <citation type="journal article" date="2006" name="Environ. Microbiol.">
        <title>Detection of phosphonoacetate degradation and phnA genes in soil bacteria from distinct geographical origins suggest its possible biogenic origin.</title>
        <authorList>
            <person name="Panas P."/>
            <person name="Ternan N.G."/>
            <person name="Dooley J.S."/>
            <person name="McMullan G."/>
        </authorList>
    </citation>
    <scope>NUCLEOTIDE SEQUENCE [GENOMIC DNA]</scope>
    <source>
        <strain evidence="3">3b</strain>
    </source>
</reference>
<keyword id="KW-0378">Hydrolase</keyword>
<keyword id="KW-0479">Metal-binding</keyword>
<keyword id="KW-0862">Zinc</keyword>
<organism>
    <name type="scientific">Pseudomonas putida</name>
    <name type="common">Arthrobacter siderocapsulatus</name>
    <dbReference type="NCBI Taxonomy" id="303"/>
    <lineage>
        <taxon>Bacteria</taxon>
        <taxon>Pseudomonadati</taxon>
        <taxon>Pseudomonadota</taxon>
        <taxon>Gammaproteobacteria</taxon>
        <taxon>Pseudomonadales</taxon>
        <taxon>Pseudomonadaceae</taxon>
        <taxon>Pseudomonas</taxon>
    </lineage>
</organism>
<sequence>MTQLINVNSRSYRLSSAPTIVICVDGCEQEYINQAIQAGQAPFLAELTDFGTVLTGDCVVPSFTNPNNLSIVTGAPPSVHGICGNFFFDQETQEEVLMNDAKYLRAPTILAEMAKAGQLVAVVTAKDKLRNLLGHQLKGICFSAEKADQVSLEEHGVENILARVGMPVPSVYSADLSEFVFAAGLSLLINERPDFMYLSTTDYVQHKHAPGTPEANAFYAMMDSYFKRYHEQGAIVAITADHGMNAKTDAIGRPNILFLQDLLDAQYGAQRTRVLLPITDPYVVHHGALGSYATVYLRDAVPQRDAIDFLAGIAGVEAVLTRSQACQRFELPEDRIGDLVVLGERLTVLGSAADKHDLSGLTVPLRSHGGVSEQKVPLIFNRKLVGLDSFDRLRNFDIIDLALNHLA</sequence>
<proteinExistence type="inferred from homology"/>
<evidence type="ECO:0000250" key="1">
    <source>
        <dbReference type="UniProtKB" id="Q51782"/>
    </source>
</evidence>
<evidence type="ECO:0000305" key="2"/>
<evidence type="ECO:0000312" key="3">
    <source>
        <dbReference type="EMBL" id="CAI93865.1"/>
    </source>
</evidence>
<comment type="function">
    <text evidence="1">Specifically hydrolyzes phosphonoacetate. Does not have activity on other organophosphonates or acetates (By similarity).</text>
</comment>
<comment type="catalytic activity">
    <reaction evidence="1">
        <text>phosphonoacetate + H2O = acetate + phosphate + H(+)</text>
        <dbReference type="Rhea" id="RHEA:16749"/>
        <dbReference type="ChEBI" id="CHEBI:15377"/>
        <dbReference type="ChEBI" id="CHEBI:15378"/>
        <dbReference type="ChEBI" id="CHEBI:30089"/>
        <dbReference type="ChEBI" id="CHEBI:43474"/>
        <dbReference type="ChEBI" id="CHEBI:57488"/>
        <dbReference type="EC" id="3.11.1.2"/>
    </reaction>
</comment>
<comment type="cofactor">
    <cofactor evidence="1">
        <name>Zn(2+)</name>
        <dbReference type="ChEBI" id="CHEBI:29105"/>
    </cofactor>
    <text evidence="1">Binds 2 Zn(2+) ions per subunit.</text>
</comment>
<comment type="subunit">
    <text evidence="1">Homodimer.</text>
</comment>
<comment type="similarity">
    <text evidence="2">Belongs to the alkaline phosphatase family. PhnA subfamily.</text>
</comment>
<protein>
    <recommendedName>
        <fullName evidence="3">Phosphonoacetate hydrolase</fullName>
        <ecNumber>3.11.1.2</ecNumber>
    </recommendedName>
</protein>
<dbReference type="EC" id="3.11.1.2"/>
<dbReference type="EMBL" id="AJ969112">
    <property type="protein sequence ID" value="CAI93865.1"/>
    <property type="molecule type" value="Genomic_DNA"/>
</dbReference>
<dbReference type="SMR" id="Q50HR6"/>
<dbReference type="GO" id="GO:0046872">
    <property type="term" value="F:metal ion binding"/>
    <property type="evidence" value="ECO:0007669"/>
    <property type="project" value="UniProtKB-KW"/>
</dbReference>
<dbReference type="GO" id="GO:0047400">
    <property type="term" value="F:phosphonoacetate hydrolase activity"/>
    <property type="evidence" value="ECO:0000250"/>
    <property type="project" value="UniProtKB"/>
</dbReference>
<dbReference type="GO" id="GO:0019636">
    <property type="term" value="P:phosphonoacetate metabolic process"/>
    <property type="evidence" value="ECO:0000250"/>
    <property type="project" value="UniProtKB"/>
</dbReference>
<dbReference type="CDD" id="cd16018">
    <property type="entry name" value="Enpp"/>
    <property type="match status" value="1"/>
</dbReference>
<dbReference type="Gene3D" id="3.40.720.10">
    <property type="entry name" value="Alkaline Phosphatase, subunit A"/>
    <property type="match status" value="1"/>
</dbReference>
<dbReference type="Gene3D" id="3.30.1360.110">
    <property type="entry name" value="Domain 2, Phosphonoacetate Hydrolase"/>
    <property type="match status" value="1"/>
</dbReference>
<dbReference type="InterPro" id="IPR017850">
    <property type="entry name" value="Alkaline_phosphatase_core_sf"/>
</dbReference>
<dbReference type="InterPro" id="IPR002591">
    <property type="entry name" value="Phosphodiest/P_Trfase"/>
</dbReference>
<dbReference type="InterPro" id="IPR012710">
    <property type="entry name" value="Phosphonoacetate_hydro"/>
</dbReference>
<dbReference type="InterPro" id="IPR023116">
    <property type="entry name" value="Phosphonoacetate_hydro_insert"/>
</dbReference>
<dbReference type="NCBIfam" id="TIGR02335">
    <property type="entry name" value="hydr_PhnA"/>
    <property type="match status" value="1"/>
</dbReference>
<dbReference type="PANTHER" id="PTHR10151:SF120">
    <property type="entry name" value="BIS(5'-ADENOSYL)-TRIPHOSPHATASE"/>
    <property type="match status" value="1"/>
</dbReference>
<dbReference type="PANTHER" id="PTHR10151">
    <property type="entry name" value="ECTONUCLEOTIDE PYROPHOSPHATASE/PHOSPHODIESTERASE"/>
    <property type="match status" value="1"/>
</dbReference>
<dbReference type="Pfam" id="PF01663">
    <property type="entry name" value="Phosphodiest"/>
    <property type="match status" value="1"/>
</dbReference>
<dbReference type="SUPFAM" id="SSF53649">
    <property type="entry name" value="Alkaline phosphatase-like"/>
    <property type="match status" value="1"/>
</dbReference>
<name>PHNHY_PSEPU</name>
<gene>
    <name evidence="3" type="primary">phnA</name>
</gene>
<feature type="initiator methionine" description="Removed" evidence="1">
    <location>
        <position position="1"/>
    </location>
</feature>
<feature type="chain" id="PRO_0000402580" description="Phosphonoacetate hydrolase" evidence="1">
    <location>
        <begin position="2"/>
        <end position="407"/>
    </location>
</feature>
<feature type="binding site" evidence="1">
    <location>
        <position position="25"/>
    </location>
    <ligand>
        <name>Zn(2+)</name>
        <dbReference type="ChEBI" id="CHEBI:29105"/>
        <label>1</label>
    </ligand>
</feature>
<feature type="binding site" evidence="1">
    <location>
        <position position="64"/>
    </location>
    <ligand>
        <name>substrate</name>
    </ligand>
</feature>
<feature type="binding site" evidence="1">
    <location>
        <position position="64"/>
    </location>
    <ligand>
        <name>Zn(2+)</name>
        <dbReference type="ChEBI" id="CHEBI:29105"/>
        <label>1</label>
    </ligand>
</feature>
<feature type="binding site" evidence="1">
    <location>
        <position position="202"/>
    </location>
    <ligand>
        <name>substrate</name>
    </ligand>
</feature>
<feature type="binding site" evidence="1">
    <location>
        <position position="202"/>
    </location>
    <ligand>
        <name>Zn(2+)</name>
        <dbReference type="ChEBI" id="CHEBI:29105"/>
        <label>2</label>
    </ligand>
</feature>
<feature type="binding site" evidence="1">
    <location>
        <position position="206"/>
    </location>
    <ligand>
        <name>Zn(2+)</name>
        <dbReference type="ChEBI" id="CHEBI:29105"/>
        <label>2</label>
    </ligand>
</feature>
<feature type="binding site" evidence="1">
    <location>
        <position position="241"/>
    </location>
    <ligand>
        <name>Zn(2+)</name>
        <dbReference type="ChEBI" id="CHEBI:29105"/>
        <label>1</label>
    </ligand>
</feature>
<feature type="binding site" evidence="1">
    <location>
        <position position="242"/>
    </location>
    <ligand>
        <name>substrate</name>
    </ligand>
</feature>
<feature type="binding site" evidence="1">
    <location>
        <position position="242"/>
    </location>
    <ligand>
        <name>Zn(2+)</name>
        <dbReference type="ChEBI" id="CHEBI:29105"/>
        <label>1</label>
    </ligand>
</feature>
<feature type="binding site" evidence="1">
    <location>
        <position position="368"/>
    </location>
    <ligand>
        <name>substrate</name>
    </ligand>
</feature>
<feature type="binding site" evidence="1">
    <location>
        <position position="368"/>
    </location>
    <ligand>
        <name>Zn(2+)</name>
        <dbReference type="ChEBI" id="CHEBI:29105"/>
        <label>2</label>
    </ligand>
</feature>
<accession>Q50HR6</accession>